<proteinExistence type="inferred from homology"/>
<comment type="function">
    <text evidence="1">NDH-1 shuttles electrons from NADH, via FMN and iron-sulfur (Fe-S) centers, to quinones in the respiratory chain. The immediate electron acceptor for the enzyme in this species is believed to be ubiquinone. Couples the redox reaction to proton translocation (for every two electrons transferred, four hydrogen ions are translocated across the cytoplasmic membrane), and thus conserves the redox energy in a proton gradient.</text>
</comment>
<comment type="catalytic activity">
    <reaction evidence="1">
        <text>a quinone + NADH + 5 H(+)(in) = a quinol + NAD(+) + 4 H(+)(out)</text>
        <dbReference type="Rhea" id="RHEA:57888"/>
        <dbReference type="ChEBI" id="CHEBI:15378"/>
        <dbReference type="ChEBI" id="CHEBI:24646"/>
        <dbReference type="ChEBI" id="CHEBI:57540"/>
        <dbReference type="ChEBI" id="CHEBI:57945"/>
        <dbReference type="ChEBI" id="CHEBI:132124"/>
    </reaction>
</comment>
<comment type="cofactor">
    <cofactor evidence="1">
        <name>[4Fe-4S] cluster</name>
        <dbReference type="ChEBI" id="CHEBI:49883"/>
    </cofactor>
    <text evidence="1">Binds 1 [4Fe-4S] cluster.</text>
</comment>
<comment type="subunit">
    <text evidence="1">NDH-1 is composed of 13 different subunits. Subunits NuoB, CD, E, F, and G constitute the peripheral sector of the complex.</text>
</comment>
<comment type="subcellular location">
    <subcellularLocation>
        <location evidence="1">Cell inner membrane</location>
        <topology evidence="1">Peripheral membrane protein</topology>
        <orientation evidence="1">Cytoplasmic side</orientation>
    </subcellularLocation>
</comment>
<comment type="similarity">
    <text evidence="1">Belongs to the complex I 20 kDa subunit family.</text>
</comment>
<dbReference type="EC" id="7.1.1.-" evidence="1"/>
<dbReference type="EMBL" id="AE005174">
    <property type="protein sequence ID" value="AAG57416.1"/>
    <property type="molecule type" value="Genomic_DNA"/>
</dbReference>
<dbReference type="EMBL" id="BA000007">
    <property type="protein sequence ID" value="BAB36594.1"/>
    <property type="molecule type" value="Genomic_DNA"/>
</dbReference>
<dbReference type="PIR" id="C91025">
    <property type="entry name" value="C91025"/>
</dbReference>
<dbReference type="RefSeq" id="NP_311198.1">
    <property type="nucleotide sequence ID" value="NC_002695.1"/>
</dbReference>
<dbReference type="RefSeq" id="WP_000386733.1">
    <property type="nucleotide sequence ID" value="NZ_VOAI01000001.1"/>
</dbReference>
<dbReference type="SMR" id="P0AFC9"/>
<dbReference type="STRING" id="155864.Z3546"/>
<dbReference type="GeneID" id="916879"/>
<dbReference type="GeneID" id="93774887"/>
<dbReference type="KEGG" id="ece:Z3546"/>
<dbReference type="KEGG" id="ecs:ECs_3171"/>
<dbReference type="PATRIC" id="fig|386585.9.peg.3309"/>
<dbReference type="eggNOG" id="COG0377">
    <property type="taxonomic scope" value="Bacteria"/>
</dbReference>
<dbReference type="HOGENOM" id="CLU_055737_7_3_6"/>
<dbReference type="OMA" id="CGGPYWE"/>
<dbReference type="Proteomes" id="UP000000558">
    <property type="component" value="Chromosome"/>
</dbReference>
<dbReference type="Proteomes" id="UP000002519">
    <property type="component" value="Chromosome"/>
</dbReference>
<dbReference type="GO" id="GO:0005886">
    <property type="term" value="C:plasma membrane"/>
    <property type="evidence" value="ECO:0007669"/>
    <property type="project" value="UniProtKB-SubCell"/>
</dbReference>
<dbReference type="GO" id="GO:0045271">
    <property type="term" value="C:respiratory chain complex I"/>
    <property type="evidence" value="ECO:0007669"/>
    <property type="project" value="TreeGrafter"/>
</dbReference>
<dbReference type="GO" id="GO:0051539">
    <property type="term" value="F:4 iron, 4 sulfur cluster binding"/>
    <property type="evidence" value="ECO:0007669"/>
    <property type="project" value="UniProtKB-KW"/>
</dbReference>
<dbReference type="GO" id="GO:0005506">
    <property type="term" value="F:iron ion binding"/>
    <property type="evidence" value="ECO:0007669"/>
    <property type="project" value="UniProtKB-UniRule"/>
</dbReference>
<dbReference type="GO" id="GO:0008137">
    <property type="term" value="F:NADH dehydrogenase (ubiquinone) activity"/>
    <property type="evidence" value="ECO:0007669"/>
    <property type="project" value="InterPro"/>
</dbReference>
<dbReference type="GO" id="GO:0050136">
    <property type="term" value="F:NADH:ubiquinone reductase (non-electrogenic) activity"/>
    <property type="evidence" value="ECO:0007669"/>
    <property type="project" value="UniProtKB-UniRule"/>
</dbReference>
<dbReference type="GO" id="GO:0048038">
    <property type="term" value="F:quinone binding"/>
    <property type="evidence" value="ECO:0007669"/>
    <property type="project" value="UniProtKB-KW"/>
</dbReference>
<dbReference type="GO" id="GO:0009060">
    <property type="term" value="P:aerobic respiration"/>
    <property type="evidence" value="ECO:0007669"/>
    <property type="project" value="TreeGrafter"/>
</dbReference>
<dbReference type="GO" id="GO:0015990">
    <property type="term" value="P:electron transport coupled proton transport"/>
    <property type="evidence" value="ECO:0007669"/>
    <property type="project" value="TreeGrafter"/>
</dbReference>
<dbReference type="FunFam" id="3.40.50.12280:FF:000002">
    <property type="entry name" value="NADH-quinone oxidoreductase subunit B"/>
    <property type="match status" value="1"/>
</dbReference>
<dbReference type="Gene3D" id="3.40.50.12280">
    <property type="match status" value="1"/>
</dbReference>
<dbReference type="HAMAP" id="MF_01356">
    <property type="entry name" value="NDH1_NuoB"/>
    <property type="match status" value="1"/>
</dbReference>
<dbReference type="InterPro" id="IPR006137">
    <property type="entry name" value="NADH_UbQ_OxRdtase-like_20kDa"/>
</dbReference>
<dbReference type="InterPro" id="IPR006138">
    <property type="entry name" value="NADH_UQ_OxRdtase_20Kd_su"/>
</dbReference>
<dbReference type="NCBIfam" id="TIGR01957">
    <property type="entry name" value="nuoB_fam"/>
    <property type="match status" value="1"/>
</dbReference>
<dbReference type="NCBIfam" id="NF005012">
    <property type="entry name" value="PRK06411.1"/>
    <property type="match status" value="1"/>
</dbReference>
<dbReference type="PANTHER" id="PTHR11995">
    <property type="entry name" value="NADH DEHYDROGENASE"/>
    <property type="match status" value="1"/>
</dbReference>
<dbReference type="PANTHER" id="PTHR11995:SF14">
    <property type="entry name" value="NADH DEHYDROGENASE [UBIQUINONE] IRON-SULFUR PROTEIN 7, MITOCHONDRIAL"/>
    <property type="match status" value="1"/>
</dbReference>
<dbReference type="Pfam" id="PF01058">
    <property type="entry name" value="Oxidored_q6"/>
    <property type="match status" value="1"/>
</dbReference>
<dbReference type="SUPFAM" id="SSF56770">
    <property type="entry name" value="HydA/Nqo6-like"/>
    <property type="match status" value="1"/>
</dbReference>
<dbReference type="PROSITE" id="PS01150">
    <property type="entry name" value="COMPLEX1_20K"/>
    <property type="match status" value="1"/>
</dbReference>
<gene>
    <name evidence="1" type="primary">nuoB</name>
    <name type="ordered locus">Z3546</name>
    <name type="ordered locus">ECs3171</name>
</gene>
<keyword id="KW-0004">4Fe-4S</keyword>
<keyword id="KW-0997">Cell inner membrane</keyword>
<keyword id="KW-1003">Cell membrane</keyword>
<keyword id="KW-0408">Iron</keyword>
<keyword id="KW-0411">Iron-sulfur</keyword>
<keyword id="KW-0472">Membrane</keyword>
<keyword id="KW-0479">Metal-binding</keyword>
<keyword id="KW-0520">NAD</keyword>
<keyword id="KW-0874">Quinone</keyword>
<keyword id="KW-1185">Reference proteome</keyword>
<keyword id="KW-1278">Translocase</keyword>
<keyword id="KW-0813">Transport</keyword>
<keyword id="KW-0830">Ubiquinone</keyword>
<reference key="1">
    <citation type="journal article" date="2001" name="Nature">
        <title>Genome sequence of enterohaemorrhagic Escherichia coli O157:H7.</title>
        <authorList>
            <person name="Perna N.T."/>
            <person name="Plunkett G. III"/>
            <person name="Burland V."/>
            <person name="Mau B."/>
            <person name="Glasner J.D."/>
            <person name="Rose D.J."/>
            <person name="Mayhew G.F."/>
            <person name="Evans P.S."/>
            <person name="Gregor J."/>
            <person name="Kirkpatrick H.A."/>
            <person name="Posfai G."/>
            <person name="Hackett J."/>
            <person name="Klink S."/>
            <person name="Boutin A."/>
            <person name="Shao Y."/>
            <person name="Miller L."/>
            <person name="Grotbeck E.J."/>
            <person name="Davis N.W."/>
            <person name="Lim A."/>
            <person name="Dimalanta E.T."/>
            <person name="Potamousis K."/>
            <person name="Apodaca J."/>
            <person name="Anantharaman T.S."/>
            <person name="Lin J."/>
            <person name="Yen G."/>
            <person name="Schwartz D.C."/>
            <person name="Welch R.A."/>
            <person name="Blattner F.R."/>
        </authorList>
    </citation>
    <scope>NUCLEOTIDE SEQUENCE [LARGE SCALE GENOMIC DNA]</scope>
    <source>
        <strain>O157:H7 / EDL933 / ATCC 700927 / EHEC</strain>
    </source>
</reference>
<reference key="2">
    <citation type="journal article" date="2001" name="DNA Res.">
        <title>Complete genome sequence of enterohemorrhagic Escherichia coli O157:H7 and genomic comparison with a laboratory strain K-12.</title>
        <authorList>
            <person name="Hayashi T."/>
            <person name="Makino K."/>
            <person name="Ohnishi M."/>
            <person name="Kurokawa K."/>
            <person name="Ishii K."/>
            <person name="Yokoyama K."/>
            <person name="Han C.-G."/>
            <person name="Ohtsubo E."/>
            <person name="Nakayama K."/>
            <person name="Murata T."/>
            <person name="Tanaka M."/>
            <person name="Tobe T."/>
            <person name="Iida T."/>
            <person name="Takami H."/>
            <person name="Honda T."/>
            <person name="Sasakawa C."/>
            <person name="Ogasawara N."/>
            <person name="Yasunaga T."/>
            <person name="Kuhara S."/>
            <person name="Shiba T."/>
            <person name="Hattori M."/>
            <person name="Shinagawa H."/>
        </authorList>
    </citation>
    <scope>NUCLEOTIDE SEQUENCE [LARGE SCALE GENOMIC DNA]</scope>
    <source>
        <strain>O157:H7 / Sakai / RIMD 0509952 / EHEC</strain>
    </source>
</reference>
<protein>
    <recommendedName>
        <fullName evidence="1">NADH-quinone oxidoreductase subunit B</fullName>
        <ecNumber evidence="1">7.1.1.-</ecNumber>
    </recommendedName>
    <alternativeName>
        <fullName evidence="1">NADH dehydrogenase I subunit B</fullName>
    </alternativeName>
    <alternativeName>
        <fullName evidence="1">NDH-1 subunit B</fullName>
    </alternativeName>
    <alternativeName>
        <fullName>NUO2</fullName>
    </alternativeName>
</protein>
<organism>
    <name type="scientific">Escherichia coli O157:H7</name>
    <dbReference type="NCBI Taxonomy" id="83334"/>
    <lineage>
        <taxon>Bacteria</taxon>
        <taxon>Pseudomonadati</taxon>
        <taxon>Pseudomonadota</taxon>
        <taxon>Gammaproteobacteria</taxon>
        <taxon>Enterobacterales</taxon>
        <taxon>Enterobacteriaceae</taxon>
        <taxon>Escherichia</taxon>
    </lineage>
</organism>
<feature type="chain" id="PRO_0000118766" description="NADH-quinone oxidoreductase subunit B">
    <location>
        <begin position="1"/>
        <end position="220"/>
    </location>
</feature>
<feature type="binding site" evidence="1">
    <location>
        <position position="63"/>
    </location>
    <ligand>
        <name>[4Fe-4S] cluster</name>
        <dbReference type="ChEBI" id="CHEBI:49883"/>
    </ligand>
</feature>
<feature type="binding site" evidence="1">
    <location>
        <position position="64"/>
    </location>
    <ligand>
        <name>[4Fe-4S] cluster</name>
        <dbReference type="ChEBI" id="CHEBI:49883"/>
    </ligand>
</feature>
<feature type="binding site" evidence="1">
    <location>
        <position position="129"/>
    </location>
    <ligand>
        <name>[4Fe-4S] cluster</name>
        <dbReference type="ChEBI" id="CHEBI:49883"/>
    </ligand>
</feature>
<feature type="binding site" evidence="1">
    <location>
        <position position="158"/>
    </location>
    <ligand>
        <name>[4Fe-4S] cluster</name>
        <dbReference type="ChEBI" id="CHEBI:49883"/>
    </ligand>
</feature>
<sequence length="220" mass="25056">MDYTLTRIDPNGENDRYPLQKQEIVTDPLEQEVNKNVFMGKLNDMVNWGRKNSIWPYNFGLSCCYVEMVTSFTAVHDVARFGAEVLRASPRQADLMVVAGTCFTKMAPVIQRLYDQMLEPKWVISMGACANSGGMYDIYSVVQGVDKFIPVDVYIPGCPPRPEAYMQALMLLQESIGKERRPLSWVVGDQGVYRANMQSERERKRGERIAVTNLRTPDEI</sequence>
<evidence type="ECO:0000255" key="1">
    <source>
        <dbReference type="HAMAP-Rule" id="MF_01356"/>
    </source>
</evidence>
<name>NUOB_ECO57</name>
<accession>P0AFC9</accession>
<accession>P33598</accession>
<accession>P78090</accession>
<accession>P78186</accession>
<accession>P78187</accession>